<organism>
    <name type="scientific">Nymphaea alba</name>
    <name type="common">White water-lily</name>
    <name type="synonym">Castalia alba</name>
    <dbReference type="NCBI Taxonomy" id="34301"/>
    <lineage>
        <taxon>Eukaryota</taxon>
        <taxon>Viridiplantae</taxon>
        <taxon>Streptophyta</taxon>
        <taxon>Embryophyta</taxon>
        <taxon>Tracheophyta</taxon>
        <taxon>Spermatophyta</taxon>
        <taxon>Magnoliopsida</taxon>
        <taxon>Nymphaeales</taxon>
        <taxon>Nymphaeaceae</taxon>
        <taxon>Nymphaea</taxon>
    </lineage>
</organism>
<name>ATPH_NYMAL</name>
<geneLocation type="chloroplast"/>
<dbReference type="EMBL" id="AJ627251">
    <property type="protein sequence ID" value="CAF28580.1"/>
    <property type="molecule type" value="Genomic_DNA"/>
</dbReference>
<dbReference type="RefSeq" id="YP_053142.1">
    <property type="nucleotide sequence ID" value="NC_006050.1"/>
</dbReference>
<dbReference type="SMR" id="Q6EW61"/>
<dbReference type="GeneID" id="2896171"/>
<dbReference type="GO" id="GO:0009535">
    <property type="term" value="C:chloroplast thylakoid membrane"/>
    <property type="evidence" value="ECO:0007669"/>
    <property type="project" value="UniProtKB-SubCell"/>
</dbReference>
<dbReference type="GO" id="GO:0045259">
    <property type="term" value="C:proton-transporting ATP synthase complex"/>
    <property type="evidence" value="ECO:0007669"/>
    <property type="project" value="UniProtKB-KW"/>
</dbReference>
<dbReference type="GO" id="GO:0033177">
    <property type="term" value="C:proton-transporting two-sector ATPase complex, proton-transporting domain"/>
    <property type="evidence" value="ECO:0007669"/>
    <property type="project" value="InterPro"/>
</dbReference>
<dbReference type="GO" id="GO:0008289">
    <property type="term" value="F:lipid binding"/>
    <property type="evidence" value="ECO:0007669"/>
    <property type="project" value="UniProtKB-KW"/>
</dbReference>
<dbReference type="GO" id="GO:0046933">
    <property type="term" value="F:proton-transporting ATP synthase activity, rotational mechanism"/>
    <property type="evidence" value="ECO:0007669"/>
    <property type="project" value="UniProtKB-UniRule"/>
</dbReference>
<dbReference type="CDD" id="cd18183">
    <property type="entry name" value="ATP-synt_Fo_c_ATPH"/>
    <property type="match status" value="1"/>
</dbReference>
<dbReference type="FunFam" id="1.20.20.10:FF:000001">
    <property type="entry name" value="ATP synthase subunit c, chloroplastic"/>
    <property type="match status" value="1"/>
</dbReference>
<dbReference type="Gene3D" id="1.20.20.10">
    <property type="entry name" value="F1F0 ATP synthase subunit C"/>
    <property type="match status" value="1"/>
</dbReference>
<dbReference type="HAMAP" id="MF_01396">
    <property type="entry name" value="ATP_synth_c_bact"/>
    <property type="match status" value="1"/>
</dbReference>
<dbReference type="InterPro" id="IPR005953">
    <property type="entry name" value="ATP_synth_csu_bac/chlpt"/>
</dbReference>
<dbReference type="InterPro" id="IPR000454">
    <property type="entry name" value="ATP_synth_F0_csu"/>
</dbReference>
<dbReference type="InterPro" id="IPR020537">
    <property type="entry name" value="ATP_synth_F0_csu_DDCD_BS"/>
</dbReference>
<dbReference type="InterPro" id="IPR038662">
    <property type="entry name" value="ATP_synth_F0_csu_sf"/>
</dbReference>
<dbReference type="InterPro" id="IPR002379">
    <property type="entry name" value="ATPase_proteolipid_c-like_dom"/>
</dbReference>
<dbReference type="InterPro" id="IPR035921">
    <property type="entry name" value="F/V-ATP_Csub_sf"/>
</dbReference>
<dbReference type="NCBIfam" id="TIGR01260">
    <property type="entry name" value="ATP_synt_c"/>
    <property type="match status" value="1"/>
</dbReference>
<dbReference type="NCBIfam" id="NF005608">
    <property type="entry name" value="PRK07354.1"/>
    <property type="match status" value="1"/>
</dbReference>
<dbReference type="PANTHER" id="PTHR10031">
    <property type="entry name" value="ATP SYNTHASE LIPID-BINDING PROTEIN, MITOCHONDRIAL"/>
    <property type="match status" value="1"/>
</dbReference>
<dbReference type="PANTHER" id="PTHR10031:SF0">
    <property type="entry name" value="ATPASE PROTEIN 9"/>
    <property type="match status" value="1"/>
</dbReference>
<dbReference type="Pfam" id="PF00137">
    <property type="entry name" value="ATP-synt_C"/>
    <property type="match status" value="1"/>
</dbReference>
<dbReference type="PRINTS" id="PR00124">
    <property type="entry name" value="ATPASEC"/>
</dbReference>
<dbReference type="SUPFAM" id="SSF81333">
    <property type="entry name" value="F1F0 ATP synthase subunit C"/>
    <property type="match status" value="1"/>
</dbReference>
<dbReference type="PROSITE" id="PS00605">
    <property type="entry name" value="ATPASE_C"/>
    <property type="match status" value="1"/>
</dbReference>
<comment type="function">
    <text evidence="1">F(1)F(0) ATP synthase produces ATP from ADP in the presence of a proton or sodium gradient. F-type ATPases consist of two structural domains, F(1) containing the extramembraneous catalytic core and F(0) containing the membrane proton channel, linked together by a central stalk and a peripheral stalk. During catalysis, ATP synthesis in the catalytic domain of F(1) is coupled via a rotary mechanism of the central stalk subunits to proton translocation.</text>
</comment>
<comment type="function">
    <text evidence="1">Key component of the F(0) channel; it plays a direct role in translocation across the membrane. A homomeric c-ring of between 10-14 subunits forms the central stalk rotor element with the F(1) delta and epsilon subunits.</text>
</comment>
<comment type="subunit">
    <text evidence="1">F-type ATPases have 2 components, F(1) - the catalytic core - and F(0) - the membrane proton channel. F(1) has five subunits: alpha(3), beta(3), gamma(1), delta(1), epsilon(1). F(0) has four main subunits: a(1), b(1), b'(1) and c(10-14). The alpha and beta chains form an alternating ring which encloses part of the gamma chain. F(1) is attached to F(0) by a central stalk formed by the gamma and epsilon chains, while a peripheral stalk is formed by the delta, b and b' chains.</text>
</comment>
<comment type="subcellular location">
    <subcellularLocation>
        <location evidence="1">Plastid</location>
        <location evidence="1">Chloroplast thylakoid membrane</location>
        <topology evidence="1">Multi-pass membrane protein</topology>
    </subcellularLocation>
</comment>
<comment type="miscellaneous">
    <text>In plastids the F-type ATPase is also known as CF(1)CF(0).</text>
</comment>
<comment type="similarity">
    <text evidence="1">Belongs to the ATPase C chain family.</text>
</comment>
<gene>
    <name evidence="1" type="primary">atpH</name>
</gene>
<sequence>MNPLISAASVIAAGLAVGLASIGPGVGQGTAAGQAVEGIARQPEAEGKIRGTLLLSLAFMEALTIYGLVVALALLFANPFV</sequence>
<protein>
    <recommendedName>
        <fullName evidence="1">ATP synthase subunit c, chloroplastic</fullName>
    </recommendedName>
    <alternativeName>
        <fullName evidence="1">ATP synthase F(0) sector subunit c</fullName>
    </alternativeName>
    <alternativeName>
        <fullName evidence="1">ATPase subunit III</fullName>
    </alternativeName>
    <alternativeName>
        <fullName evidence="1">F-type ATPase subunit c</fullName>
        <shortName evidence="1">F-ATPase subunit c</shortName>
    </alternativeName>
    <alternativeName>
        <fullName evidence="1">Lipid-binding protein</fullName>
    </alternativeName>
</protein>
<evidence type="ECO:0000255" key="1">
    <source>
        <dbReference type="HAMAP-Rule" id="MF_01396"/>
    </source>
</evidence>
<proteinExistence type="inferred from homology"/>
<feature type="chain" id="PRO_0000362941" description="ATP synthase subunit c, chloroplastic">
    <location>
        <begin position="1"/>
        <end position="81"/>
    </location>
</feature>
<feature type="transmembrane region" description="Helical" evidence="1">
    <location>
        <begin position="3"/>
        <end position="23"/>
    </location>
</feature>
<feature type="transmembrane region" description="Helical" evidence="1">
    <location>
        <begin position="57"/>
        <end position="77"/>
    </location>
</feature>
<feature type="site" description="Reversibly protonated during proton transport" evidence="1">
    <location>
        <position position="61"/>
    </location>
</feature>
<reference key="1">
    <citation type="journal article" date="2004" name="Mol. Biol. Evol.">
        <title>The chloroplast genome of Nymphaea alba: whole-genome analyses and the problem of identifying the most basal angiosperm.</title>
        <authorList>
            <person name="Goremykin V.V."/>
            <person name="Hirsch-Ernst K.I."/>
            <person name="Woelfl S."/>
            <person name="Hellwig F.H."/>
        </authorList>
    </citation>
    <scope>NUCLEOTIDE SEQUENCE [LARGE SCALE GENOMIC DNA]</scope>
</reference>
<keyword id="KW-0066">ATP synthesis</keyword>
<keyword id="KW-0138">CF(0)</keyword>
<keyword id="KW-0150">Chloroplast</keyword>
<keyword id="KW-0375">Hydrogen ion transport</keyword>
<keyword id="KW-0406">Ion transport</keyword>
<keyword id="KW-0446">Lipid-binding</keyword>
<keyword id="KW-0472">Membrane</keyword>
<keyword id="KW-0934">Plastid</keyword>
<keyword id="KW-0793">Thylakoid</keyword>
<keyword id="KW-0812">Transmembrane</keyword>
<keyword id="KW-1133">Transmembrane helix</keyword>
<keyword id="KW-0813">Transport</keyword>
<accession>Q6EW61</accession>